<organism>
    <name type="scientific">Brucella canis (strain ATCC 23365 / NCTC 10854 / RM-666)</name>
    <dbReference type="NCBI Taxonomy" id="483179"/>
    <lineage>
        <taxon>Bacteria</taxon>
        <taxon>Pseudomonadati</taxon>
        <taxon>Pseudomonadota</taxon>
        <taxon>Alphaproteobacteria</taxon>
        <taxon>Hyphomicrobiales</taxon>
        <taxon>Brucellaceae</taxon>
        <taxon>Brucella/Ochrobactrum group</taxon>
        <taxon>Brucella</taxon>
    </lineage>
</organism>
<proteinExistence type="inferred from homology"/>
<protein>
    <recommendedName>
        <fullName evidence="1">Glutamate--tRNA ligase 2</fullName>
        <ecNumber evidence="1">6.1.1.17</ecNumber>
    </recommendedName>
    <alternativeName>
        <fullName evidence="1">Glutamyl-tRNA synthetase 2</fullName>
        <shortName evidence="1">GluRS 2</shortName>
    </alternativeName>
</protein>
<comment type="function">
    <text evidence="1">Catalyzes the attachment of glutamate to tRNA(Glu) in a two-step reaction: glutamate is first activated by ATP to form Glu-AMP and then transferred to the acceptor end of tRNA(Glu).</text>
</comment>
<comment type="catalytic activity">
    <reaction evidence="1">
        <text>tRNA(Glu) + L-glutamate + ATP = L-glutamyl-tRNA(Glu) + AMP + diphosphate</text>
        <dbReference type="Rhea" id="RHEA:23540"/>
        <dbReference type="Rhea" id="RHEA-COMP:9663"/>
        <dbReference type="Rhea" id="RHEA-COMP:9680"/>
        <dbReference type="ChEBI" id="CHEBI:29985"/>
        <dbReference type="ChEBI" id="CHEBI:30616"/>
        <dbReference type="ChEBI" id="CHEBI:33019"/>
        <dbReference type="ChEBI" id="CHEBI:78442"/>
        <dbReference type="ChEBI" id="CHEBI:78520"/>
        <dbReference type="ChEBI" id="CHEBI:456215"/>
        <dbReference type="EC" id="6.1.1.17"/>
    </reaction>
</comment>
<comment type="subunit">
    <text evidence="1">Monomer.</text>
</comment>
<comment type="subcellular location">
    <subcellularLocation>
        <location evidence="1">Cytoplasm</location>
    </subcellularLocation>
</comment>
<comment type="similarity">
    <text evidence="1">Belongs to the class-I aminoacyl-tRNA synthetase family. Glutamate--tRNA ligase type 1 subfamily.</text>
</comment>
<keyword id="KW-0030">Aminoacyl-tRNA synthetase</keyword>
<keyword id="KW-0067">ATP-binding</keyword>
<keyword id="KW-0963">Cytoplasm</keyword>
<keyword id="KW-0436">Ligase</keyword>
<keyword id="KW-0547">Nucleotide-binding</keyword>
<keyword id="KW-0648">Protein biosynthesis</keyword>
<keyword id="KW-1185">Reference proteome</keyword>
<gene>
    <name evidence="1" type="primary">gltX2</name>
    <name type="ordered locus">BCAN_A1166</name>
</gene>
<evidence type="ECO:0000255" key="1">
    <source>
        <dbReference type="HAMAP-Rule" id="MF_00022"/>
    </source>
</evidence>
<evidence type="ECO:0000256" key="2">
    <source>
        <dbReference type="SAM" id="MobiDB-lite"/>
    </source>
</evidence>
<name>SYE2_BRUC2</name>
<feature type="chain" id="PRO_0000367624" description="Glutamate--tRNA ligase 2">
    <location>
        <begin position="1"/>
        <end position="473"/>
    </location>
</feature>
<feature type="region of interest" description="Disordered" evidence="2">
    <location>
        <begin position="113"/>
        <end position="136"/>
    </location>
</feature>
<feature type="short sequence motif" description="'HIGH' region" evidence="1">
    <location>
        <begin position="11"/>
        <end position="21"/>
    </location>
</feature>
<feature type="short sequence motif" description="'KMSKS' region" evidence="1">
    <location>
        <begin position="240"/>
        <end position="244"/>
    </location>
</feature>
<feature type="compositionally biased region" description="Basic and acidic residues" evidence="2">
    <location>
        <begin position="113"/>
        <end position="133"/>
    </location>
</feature>
<feature type="binding site" evidence="1">
    <location>
        <position position="243"/>
    </location>
    <ligand>
        <name>ATP</name>
        <dbReference type="ChEBI" id="CHEBI:30616"/>
    </ligand>
</feature>
<accession>A9M5G0</accession>
<sequence>MSKPVITRFAPSPTGYLHIGGARTALFNWLYAKHCGGKMLLRIEDTDRERSTEAATAAILDGLTWLGLDWDGEAISQFERAPRHREVAEELVANGKAYYCYASPEELEEMREKARAEGRPPRYDGRWRDRDPSEAPAGVKPVIRIKAPRDGETVVHDAVQGDVRFPNKDLDDFIILRSDGTPTYMHAVVVDDHDMGVTHIIRGDDHLTNAARQTIIYNAMGWDVPQMSHIPLIHGADGAKLSKRHGALGVDAYRAMGYLPAALRNYLVRLGWSHGDDEIMSTEQMIEWFDVKDINKGAARFDFQKLEAINGLYMRSSDDQALFDALVAVLPEIEGGKELAEALDDKGRAQLLLAMPGLKERAKTLVELADGAKFIFASRPLALDEKAASLLNDEGRAVLKPVYPVLEAVGEWTAESLDAAIRAHAEAEGLKLGKIAQPLRAALTGRATSPGVFDVLVVLGREESLARIGDQIG</sequence>
<reference key="1">
    <citation type="submission" date="2007-10" db="EMBL/GenBank/DDBJ databases">
        <title>Brucella canis ATCC 23365 whole genome shotgun sequencing project.</title>
        <authorList>
            <person name="Setubal J.C."/>
            <person name="Bowns C."/>
            <person name="Boyle S."/>
            <person name="Crasta O.R."/>
            <person name="Czar M.J."/>
            <person name="Dharmanolla C."/>
            <person name="Gillespie J.J."/>
            <person name="Kenyon R.W."/>
            <person name="Lu J."/>
            <person name="Mane S."/>
            <person name="Mohapatra S."/>
            <person name="Nagrani S."/>
            <person name="Purkayastha A."/>
            <person name="Rajasimha H.K."/>
            <person name="Shallom J.M."/>
            <person name="Shallom S."/>
            <person name="Shukla M."/>
            <person name="Snyder E.E."/>
            <person name="Sobral B.W."/>
            <person name="Wattam A.R."/>
            <person name="Will R."/>
            <person name="Williams K."/>
            <person name="Yoo H."/>
            <person name="Bruce D."/>
            <person name="Detter C."/>
            <person name="Munk C."/>
            <person name="Brettin T.S."/>
        </authorList>
    </citation>
    <scope>NUCLEOTIDE SEQUENCE [LARGE SCALE GENOMIC DNA]</scope>
    <source>
        <strain>ATCC 23365 / NCTC 10854 / RM-666</strain>
    </source>
</reference>
<dbReference type="EC" id="6.1.1.17" evidence="1"/>
<dbReference type="EMBL" id="CP000872">
    <property type="protein sequence ID" value="ABX62215.1"/>
    <property type="molecule type" value="Genomic_DNA"/>
</dbReference>
<dbReference type="SMR" id="A9M5G0"/>
<dbReference type="KEGG" id="bcs:BCAN_A1166"/>
<dbReference type="HOGENOM" id="CLU_015768_6_3_5"/>
<dbReference type="PhylomeDB" id="A9M5G0"/>
<dbReference type="Proteomes" id="UP000001385">
    <property type="component" value="Chromosome I"/>
</dbReference>
<dbReference type="GO" id="GO:0005829">
    <property type="term" value="C:cytosol"/>
    <property type="evidence" value="ECO:0007669"/>
    <property type="project" value="TreeGrafter"/>
</dbReference>
<dbReference type="GO" id="GO:0005524">
    <property type="term" value="F:ATP binding"/>
    <property type="evidence" value="ECO:0007669"/>
    <property type="project" value="UniProtKB-UniRule"/>
</dbReference>
<dbReference type="GO" id="GO:0004818">
    <property type="term" value="F:glutamate-tRNA ligase activity"/>
    <property type="evidence" value="ECO:0007669"/>
    <property type="project" value="UniProtKB-UniRule"/>
</dbReference>
<dbReference type="GO" id="GO:0000049">
    <property type="term" value="F:tRNA binding"/>
    <property type="evidence" value="ECO:0007669"/>
    <property type="project" value="InterPro"/>
</dbReference>
<dbReference type="GO" id="GO:0008270">
    <property type="term" value="F:zinc ion binding"/>
    <property type="evidence" value="ECO:0007669"/>
    <property type="project" value="InterPro"/>
</dbReference>
<dbReference type="GO" id="GO:0006424">
    <property type="term" value="P:glutamyl-tRNA aminoacylation"/>
    <property type="evidence" value="ECO:0007669"/>
    <property type="project" value="UniProtKB-UniRule"/>
</dbReference>
<dbReference type="CDD" id="cd00808">
    <property type="entry name" value="GluRS_core"/>
    <property type="match status" value="1"/>
</dbReference>
<dbReference type="FunFam" id="3.40.50.620:FF:000007">
    <property type="entry name" value="Glutamate--tRNA ligase"/>
    <property type="match status" value="1"/>
</dbReference>
<dbReference type="Gene3D" id="1.10.10.350">
    <property type="match status" value="1"/>
</dbReference>
<dbReference type="Gene3D" id="3.40.50.620">
    <property type="entry name" value="HUPs"/>
    <property type="match status" value="1"/>
</dbReference>
<dbReference type="HAMAP" id="MF_00022">
    <property type="entry name" value="Glu_tRNA_synth_type1"/>
    <property type="match status" value="1"/>
</dbReference>
<dbReference type="InterPro" id="IPR045462">
    <property type="entry name" value="aa-tRNA-synth_I_cd-bd"/>
</dbReference>
<dbReference type="InterPro" id="IPR020751">
    <property type="entry name" value="aa-tRNA-synth_I_codon-bd_sub2"/>
</dbReference>
<dbReference type="InterPro" id="IPR001412">
    <property type="entry name" value="aa-tRNA-synth_I_CS"/>
</dbReference>
<dbReference type="InterPro" id="IPR008925">
    <property type="entry name" value="aa_tRNA-synth_I_cd-bd_sf"/>
</dbReference>
<dbReference type="InterPro" id="IPR004527">
    <property type="entry name" value="Glu-tRNA-ligase_bac/mito"/>
</dbReference>
<dbReference type="InterPro" id="IPR000924">
    <property type="entry name" value="Glu/Gln-tRNA-synth"/>
</dbReference>
<dbReference type="InterPro" id="IPR020058">
    <property type="entry name" value="Glu/Gln-tRNA-synth_Ib_cat-dom"/>
</dbReference>
<dbReference type="InterPro" id="IPR049940">
    <property type="entry name" value="GluQ/Sye"/>
</dbReference>
<dbReference type="InterPro" id="IPR033910">
    <property type="entry name" value="GluRS_core"/>
</dbReference>
<dbReference type="InterPro" id="IPR014729">
    <property type="entry name" value="Rossmann-like_a/b/a_fold"/>
</dbReference>
<dbReference type="NCBIfam" id="TIGR00464">
    <property type="entry name" value="gltX_bact"/>
    <property type="match status" value="1"/>
</dbReference>
<dbReference type="PANTHER" id="PTHR43311">
    <property type="entry name" value="GLUTAMATE--TRNA LIGASE"/>
    <property type="match status" value="1"/>
</dbReference>
<dbReference type="PANTHER" id="PTHR43311:SF2">
    <property type="entry name" value="GLUTAMATE--TRNA LIGASE, MITOCHONDRIAL-RELATED"/>
    <property type="match status" value="1"/>
</dbReference>
<dbReference type="Pfam" id="PF19269">
    <property type="entry name" value="Anticodon_2"/>
    <property type="match status" value="1"/>
</dbReference>
<dbReference type="Pfam" id="PF00749">
    <property type="entry name" value="tRNA-synt_1c"/>
    <property type="match status" value="1"/>
</dbReference>
<dbReference type="PRINTS" id="PR00987">
    <property type="entry name" value="TRNASYNTHGLU"/>
</dbReference>
<dbReference type="SUPFAM" id="SSF48163">
    <property type="entry name" value="An anticodon-binding domain of class I aminoacyl-tRNA synthetases"/>
    <property type="match status" value="1"/>
</dbReference>
<dbReference type="SUPFAM" id="SSF52374">
    <property type="entry name" value="Nucleotidylyl transferase"/>
    <property type="match status" value="1"/>
</dbReference>
<dbReference type="PROSITE" id="PS00178">
    <property type="entry name" value="AA_TRNA_LIGASE_I"/>
    <property type="match status" value="1"/>
</dbReference>